<name>ARGC_AFIC5</name>
<feature type="chain" id="PRO_1000118061" description="N-acetyl-gamma-glutamyl-phosphate reductase">
    <location>
        <begin position="1"/>
        <end position="352"/>
    </location>
</feature>
<feature type="active site" evidence="1">
    <location>
        <position position="156"/>
    </location>
</feature>
<sequence length="352" mass="38771">MAEKKKIGILGASGYTGAELVRLLLRHPRVEIVLLTADRRAGHKMGDVFPQFAPYDLPQLVSIDSVDWAAAKLDLVFCALPHATTQTVLKDLLSKAPETKVVDLSADFRLQDPAVYAKWYGHEHHALDLQQEAVYGLTEIYRRDVKKARLVANPGCYTTCAQLPLIPLLKAKAIESDEIVIDAKSGMTGAGRSAKEEMLFSEVSEGFHAYGVGHHRHMSELDQEFSKAAGKDVLVTFTPHLTPMNRGIYSTIYVRGRRGKTARDLHETLSKQYEKDPFVYVLPFGKTPNSRHVRGSNMTFIGVAEDRKPGRAIIVSTLDNLTKGASGQAVQNMNVMLGFAETLGLDQPALSS</sequence>
<protein>
    <recommendedName>
        <fullName evidence="1">N-acetyl-gamma-glutamyl-phosphate reductase</fullName>
        <shortName evidence="1">AGPR</shortName>
        <ecNumber evidence="1">1.2.1.38</ecNumber>
    </recommendedName>
    <alternativeName>
        <fullName evidence="1">N-acetyl-glutamate semialdehyde dehydrogenase</fullName>
        <shortName evidence="1">NAGSA dehydrogenase</shortName>
    </alternativeName>
</protein>
<evidence type="ECO:0000255" key="1">
    <source>
        <dbReference type="HAMAP-Rule" id="MF_00150"/>
    </source>
</evidence>
<proteinExistence type="inferred from homology"/>
<comment type="function">
    <text evidence="1">Catalyzes the NADPH-dependent reduction of N-acetyl-5-glutamyl phosphate to yield N-acetyl-L-glutamate 5-semialdehyde.</text>
</comment>
<comment type="catalytic activity">
    <reaction evidence="1">
        <text>N-acetyl-L-glutamate 5-semialdehyde + phosphate + NADP(+) = N-acetyl-L-glutamyl 5-phosphate + NADPH + H(+)</text>
        <dbReference type="Rhea" id="RHEA:21588"/>
        <dbReference type="ChEBI" id="CHEBI:15378"/>
        <dbReference type="ChEBI" id="CHEBI:29123"/>
        <dbReference type="ChEBI" id="CHEBI:43474"/>
        <dbReference type="ChEBI" id="CHEBI:57783"/>
        <dbReference type="ChEBI" id="CHEBI:57936"/>
        <dbReference type="ChEBI" id="CHEBI:58349"/>
        <dbReference type="EC" id="1.2.1.38"/>
    </reaction>
</comment>
<comment type="pathway">
    <text evidence="1">Amino-acid biosynthesis; L-arginine biosynthesis; N(2)-acetyl-L-ornithine from L-glutamate: step 3/4.</text>
</comment>
<comment type="subcellular location">
    <subcellularLocation>
        <location evidence="1">Cytoplasm</location>
    </subcellularLocation>
</comment>
<comment type="similarity">
    <text evidence="1">Belongs to the NAGSA dehydrogenase family. Type 1 subfamily.</text>
</comment>
<gene>
    <name evidence="1" type="primary">argC</name>
    <name type="ordered locus">OCAR_6010</name>
    <name type="ordered locus">OCA5_c20150</name>
</gene>
<dbReference type="EC" id="1.2.1.38" evidence="1"/>
<dbReference type="EMBL" id="CP001196">
    <property type="protein sequence ID" value="ACI93130.1"/>
    <property type="molecule type" value="Genomic_DNA"/>
</dbReference>
<dbReference type="EMBL" id="CP002826">
    <property type="protein sequence ID" value="AEI06722.1"/>
    <property type="molecule type" value="Genomic_DNA"/>
</dbReference>
<dbReference type="RefSeq" id="WP_012563157.1">
    <property type="nucleotide sequence ID" value="NC_015684.1"/>
</dbReference>
<dbReference type="SMR" id="B6JHG4"/>
<dbReference type="STRING" id="504832.OCA5_c20150"/>
<dbReference type="KEGG" id="oca:OCAR_6010"/>
<dbReference type="KEGG" id="ocg:OCA5_c20150"/>
<dbReference type="PATRIC" id="fig|504832.7.peg.2134"/>
<dbReference type="eggNOG" id="COG0002">
    <property type="taxonomic scope" value="Bacteria"/>
</dbReference>
<dbReference type="HOGENOM" id="CLU_006384_0_1_5"/>
<dbReference type="OrthoDB" id="9801289at2"/>
<dbReference type="UniPathway" id="UPA00068">
    <property type="reaction ID" value="UER00108"/>
</dbReference>
<dbReference type="Proteomes" id="UP000007730">
    <property type="component" value="Chromosome"/>
</dbReference>
<dbReference type="GO" id="GO:0005737">
    <property type="term" value="C:cytoplasm"/>
    <property type="evidence" value="ECO:0007669"/>
    <property type="project" value="UniProtKB-SubCell"/>
</dbReference>
<dbReference type="GO" id="GO:0003942">
    <property type="term" value="F:N-acetyl-gamma-glutamyl-phosphate reductase activity"/>
    <property type="evidence" value="ECO:0007669"/>
    <property type="project" value="UniProtKB-UniRule"/>
</dbReference>
<dbReference type="GO" id="GO:0051287">
    <property type="term" value="F:NAD binding"/>
    <property type="evidence" value="ECO:0007669"/>
    <property type="project" value="InterPro"/>
</dbReference>
<dbReference type="GO" id="GO:0070401">
    <property type="term" value="F:NADP+ binding"/>
    <property type="evidence" value="ECO:0007669"/>
    <property type="project" value="InterPro"/>
</dbReference>
<dbReference type="GO" id="GO:0006526">
    <property type="term" value="P:L-arginine biosynthetic process"/>
    <property type="evidence" value="ECO:0007669"/>
    <property type="project" value="UniProtKB-UniRule"/>
</dbReference>
<dbReference type="CDD" id="cd23934">
    <property type="entry name" value="AGPR_1_C"/>
    <property type="match status" value="1"/>
</dbReference>
<dbReference type="CDD" id="cd17895">
    <property type="entry name" value="AGPR_1_N"/>
    <property type="match status" value="1"/>
</dbReference>
<dbReference type="FunFam" id="3.30.360.10:FF:000014">
    <property type="entry name" value="N-acetyl-gamma-glutamyl-phosphate reductase"/>
    <property type="match status" value="1"/>
</dbReference>
<dbReference type="Gene3D" id="3.30.360.10">
    <property type="entry name" value="Dihydrodipicolinate Reductase, domain 2"/>
    <property type="match status" value="1"/>
</dbReference>
<dbReference type="Gene3D" id="3.40.50.720">
    <property type="entry name" value="NAD(P)-binding Rossmann-like Domain"/>
    <property type="match status" value="1"/>
</dbReference>
<dbReference type="HAMAP" id="MF_00150">
    <property type="entry name" value="ArgC_type1"/>
    <property type="match status" value="1"/>
</dbReference>
<dbReference type="InterPro" id="IPR023013">
    <property type="entry name" value="AGPR_AS"/>
</dbReference>
<dbReference type="InterPro" id="IPR000706">
    <property type="entry name" value="AGPR_type-1"/>
</dbReference>
<dbReference type="InterPro" id="IPR036291">
    <property type="entry name" value="NAD(P)-bd_dom_sf"/>
</dbReference>
<dbReference type="InterPro" id="IPR050085">
    <property type="entry name" value="NAGSA_dehydrogenase"/>
</dbReference>
<dbReference type="InterPro" id="IPR000534">
    <property type="entry name" value="Semialdehyde_DH_NAD-bd"/>
</dbReference>
<dbReference type="NCBIfam" id="TIGR01850">
    <property type="entry name" value="argC"/>
    <property type="match status" value="1"/>
</dbReference>
<dbReference type="PANTHER" id="PTHR32338:SF10">
    <property type="entry name" value="N-ACETYL-GAMMA-GLUTAMYL-PHOSPHATE REDUCTASE, CHLOROPLASTIC-RELATED"/>
    <property type="match status" value="1"/>
</dbReference>
<dbReference type="PANTHER" id="PTHR32338">
    <property type="entry name" value="N-ACETYL-GAMMA-GLUTAMYL-PHOSPHATE REDUCTASE, CHLOROPLASTIC-RELATED-RELATED"/>
    <property type="match status" value="1"/>
</dbReference>
<dbReference type="Pfam" id="PF01118">
    <property type="entry name" value="Semialdhyde_dh"/>
    <property type="match status" value="1"/>
</dbReference>
<dbReference type="Pfam" id="PF22698">
    <property type="entry name" value="Semialdhyde_dhC_1"/>
    <property type="match status" value="1"/>
</dbReference>
<dbReference type="SMART" id="SM00859">
    <property type="entry name" value="Semialdhyde_dh"/>
    <property type="match status" value="1"/>
</dbReference>
<dbReference type="SUPFAM" id="SSF55347">
    <property type="entry name" value="Glyceraldehyde-3-phosphate dehydrogenase-like, C-terminal domain"/>
    <property type="match status" value="1"/>
</dbReference>
<dbReference type="SUPFAM" id="SSF51735">
    <property type="entry name" value="NAD(P)-binding Rossmann-fold domains"/>
    <property type="match status" value="1"/>
</dbReference>
<dbReference type="PROSITE" id="PS01224">
    <property type="entry name" value="ARGC"/>
    <property type="match status" value="1"/>
</dbReference>
<organism>
    <name type="scientific">Afipia carboxidovorans (strain ATCC 49405 / DSM 1227 / KCTC 32145 / OM5)</name>
    <name type="common">Oligotropha carboxidovorans</name>
    <dbReference type="NCBI Taxonomy" id="504832"/>
    <lineage>
        <taxon>Bacteria</taxon>
        <taxon>Pseudomonadati</taxon>
        <taxon>Pseudomonadota</taxon>
        <taxon>Alphaproteobacteria</taxon>
        <taxon>Hyphomicrobiales</taxon>
        <taxon>Nitrobacteraceae</taxon>
        <taxon>Afipia</taxon>
    </lineage>
</organism>
<keyword id="KW-0028">Amino-acid biosynthesis</keyword>
<keyword id="KW-0055">Arginine biosynthesis</keyword>
<keyword id="KW-0963">Cytoplasm</keyword>
<keyword id="KW-0521">NADP</keyword>
<keyword id="KW-0560">Oxidoreductase</keyword>
<keyword id="KW-1185">Reference proteome</keyword>
<reference key="1">
    <citation type="journal article" date="2008" name="J. Bacteriol.">
        <title>Genome sequence of the chemolithoautotrophic bacterium Oligotropha carboxidovorans OM5T.</title>
        <authorList>
            <person name="Paul D."/>
            <person name="Bridges S."/>
            <person name="Burgess S.C."/>
            <person name="Dandass Y."/>
            <person name="Lawrence M.L."/>
        </authorList>
    </citation>
    <scope>NUCLEOTIDE SEQUENCE [LARGE SCALE GENOMIC DNA]</scope>
    <source>
        <strain>ATCC 49405 / DSM 1227 / KCTC 32145 / OM5</strain>
    </source>
</reference>
<reference key="2">
    <citation type="journal article" date="2011" name="J. Bacteriol.">
        <title>Complete genome sequences of the chemolithoautotrophic Oligotropha carboxidovorans strains OM4 and OM5.</title>
        <authorList>
            <person name="Volland S."/>
            <person name="Rachinger M."/>
            <person name="Strittmatter A."/>
            <person name="Daniel R."/>
            <person name="Gottschalk G."/>
            <person name="Meyer O."/>
        </authorList>
    </citation>
    <scope>NUCLEOTIDE SEQUENCE [LARGE SCALE GENOMIC DNA]</scope>
    <source>
        <strain>ATCC 49405 / DSM 1227 / KCTC 32145 / OM5</strain>
    </source>
</reference>
<accession>B6JHG4</accession>
<accession>F8BW11</accession>